<organism>
    <name type="scientific">Escherichia coli (strain K12)</name>
    <dbReference type="NCBI Taxonomy" id="83333"/>
    <lineage>
        <taxon>Bacteria</taxon>
        <taxon>Pseudomonadati</taxon>
        <taxon>Pseudomonadota</taxon>
        <taxon>Gammaproteobacteria</taxon>
        <taxon>Enterobacterales</taxon>
        <taxon>Enterobacteriaceae</taxon>
        <taxon>Escherichia</taxon>
    </lineage>
</organism>
<sequence length="255" mass="27435">MIPVERRQIILEMVAEKGIVSIAELTDRMNVSHMTIRRDLQKLEQQGAVVLVSGGVQSPGRVAHEPSHQVKTALAMTQKAAIGKLAASLVQPGSCIYLDAGTTTLAIAQHLIHMESLTVVTNDFVIADYLLDNSNCTIIHTGGAVCRENRSCVGEAAATMLRSLMIDQAFISASSWSVRGISTPAEDKVTVKRAIASASRQRVLVCDATKYGQVATWLALPLSEFDQIITDDGLPESASRALVKQDLSLLVAKNE</sequence>
<evidence type="ECO:0000255" key="1">
    <source>
        <dbReference type="PROSITE-ProRule" id="PRU00349"/>
    </source>
</evidence>
<evidence type="ECO:0000305" key="2"/>
<proteinExistence type="predicted"/>
<protein>
    <recommendedName>
        <fullName>Uncharacterized HTH-type transcriptional regulator YgbI</fullName>
    </recommendedName>
</protein>
<feature type="chain" id="PRO_0000050274" description="Uncharacterized HTH-type transcriptional regulator YgbI">
    <location>
        <begin position="1"/>
        <end position="255"/>
    </location>
</feature>
<feature type="domain" description="HTH deoR-type" evidence="1">
    <location>
        <begin position="3"/>
        <end position="58"/>
    </location>
</feature>
<feature type="DNA-binding region" description="H-T-H motif" evidence="1">
    <location>
        <begin position="20"/>
        <end position="39"/>
    </location>
</feature>
<gene>
    <name type="primary">ygbI</name>
    <name type="ordered locus">b2735</name>
    <name type="ordered locus">JW2705</name>
</gene>
<keyword id="KW-0238">DNA-binding</keyword>
<keyword id="KW-1185">Reference proteome</keyword>
<keyword id="KW-0804">Transcription</keyword>
<keyword id="KW-0805">Transcription regulation</keyword>
<accession>P52598</accession>
<accession>Q2MA94</accession>
<name>YGBI_ECOLI</name>
<dbReference type="EMBL" id="U29579">
    <property type="protein sequence ID" value="AAA69245.1"/>
    <property type="status" value="ALT_INIT"/>
    <property type="molecule type" value="Genomic_DNA"/>
</dbReference>
<dbReference type="EMBL" id="U00096">
    <property type="protein sequence ID" value="AAC75777.2"/>
    <property type="molecule type" value="Genomic_DNA"/>
</dbReference>
<dbReference type="EMBL" id="AP009048">
    <property type="protein sequence ID" value="BAE76812.1"/>
    <property type="status" value="ALT_INIT"/>
    <property type="molecule type" value="Genomic_DNA"/>
</dbReference>
<dbReference type="PIR" id="C65054">
    <property type="entry name" value="C65054"/>
</dbReference>
<dbReference type="RefSeq" id="NP_417215.2">
    <property type="nucleotide sequence ID" value="NC_000913.3"/>
</dbReference>
<dbReference type="RefSeq" id="WP_001300386.1">
    <property type="nucleotide sequence ID" value="NZ_LN832404.1"/>
</dbReference>
<dbReference type="SMR" id="P52598"/>
<dbReference type="BioGRID" id="4261442">
    <property type="interactions" value="122"/>
</dbReference>
<dbReference type="DIP" id="DIP-12110N"/>
<dbReference type="FunCoup" id="P52598">
    <property type="interactions" value="6"/>
</dbReference>
<dbReference type="STRING" id="511145.b2735"/>
<dbReference type="jPOST" id="P52598"/>
<dbReference type="PaxDb" id="511145-b2735"/>
<dbReference type="EnsemblBacteria" id="AAC75777">
    <property type="protein sequence ID" value="AAC75777"/>
    <property type="gene ID" value="b2735"/>
</dbReference>
<dbReference type="GeneID" id="947204"/>
<dbReference type="KEGG" id="ecj:JW2705"/>
<dbReference type="KEGG" id="eco:b2735"/>
<dbReference type="KEGG" id="ecoc:C3026_15045"/>
<dbReference type="PATRIC" id="fig|1411691.4.peg.4005"/>
<dbReference type="EchoBASE" id="EB2906"/>
<dbReference type="eggNOG" id="COG1349">
    <property type="taxonomic scope" value="Bacteria"/>
</dbReference>
<dbReference type="HOGENOM" id="CLU_060699_1_4_6"/>
<dbReference type="InParanoid" id="P52598"/>
<dbReference type="OMA" id="RPQFKIV"/>
<dbReference type="OrthoDB" id="5685843at2"/>
<dbReference type="PhylomeDB" id="P52598"/>
<dbReference type="BioCyc" id="EcoCyc:G7416-MONOMER"/>
<dbReference type="PRO" id="PR:P52598"/>
<dbReference type="Proteomes" id="UP000000625">
    <property type="component" value="Chromosome"/>
</dbReference>
<dbReference type="GO" id="GO:0000987">
    <property type="term" value="F:cis-regulatory region sequence-specific DNA binding"/>
    <property type="evidence" value="ECO:0000318"/>
    <property type="project" value="GO_Central"/>
</dbReference>
<dbReference type="GO" id="GO:0098531">
    <property type="term" value="F:ligand-modulated transcription factor activity"/>
    <property type="evidence" value="ECO:0000318"/>
    <property type="project" value="GO_Central"/>
</dbReference>
<dbReference type="GO" id="GO:0006355">
    <property type="term" value="P:regulation of DNA-templated transcription"/>
    <property type="evidence" value="ECO:0000318"/>
    <property type="project" value="GO_Central"/>
</dbReference>
<dbReference type="Gene3D" id="3.40.50.1360">
    <property type="match status" value="1"/>
</dbReference>
<dbReference type="Gene3D" id="1.10.10.10">
    <property type="entry name" value="Winged helix-like DNA-binding domain superfamily/Winged helix DNA-binding domain"/>
    <property type="match status" value="1"/>
</dbReference>
<dbReference type="InterPro" id="IPR050313">
    <property type="entry name" value="Carb_Metab_HTH_regulators"/>
</dbReference>
<dbReference type="InterPro" id="IPR014036">
    <property type="entry name" value="DeoR-like_C"/>
</dbReference>
<dbReference type="InterPro" id="IPR001034">
    <property type="entry name" value="DeoR_HTH"/>
</dbReference>
<dbReference type="InterPro" id="IPR053533">
    <property type="entry name" value="HTH-type_regulator_YgbI-like"/>
</dbReference>
<dbReference type="InterPro" id="IPR037171">
    <property type="entry name" value="NagB/RpiA_transferase-like"/>
</dbReference>
<dbReference type="InterPro" id="IPR018356">
    <property type="entry name" value="Tscrpt_reg_HTH_DeoR_CS"/>
</dbReference>
<dbReference type="InterPro" id="IPR036388">
    <property type="entry name" value="WH-like_DNA-bd_sf"/>
</dbReference>
<dbReference type="InterPro" id="IPR036390">
    <property type="entry name" value="WH_DNA-bd_sf"/>
</dbReference>
<dbReference type="NCBIfam" id="NF040890">
    <property type="entry name" value="trans_reg_YgbI"/>
    <property type="match status" value="1"/>
</dbReference>
<dbReference type="PANTHER" id="PTHR30363">
    <property type="entry name" value="HTH-TYPE TRANSCRIPTIONAL REGULATOR SRLR-RELATED"/>
    <property type="match status" value="1"/>
</dbReference>
<dbReference type="PANTHER" id="PTHR30363:SF58">
    <property type="entry name" value="REGULATORY PROTEIN, DEOR FAMILY"/>
    <property type="match status" value="1"/>
</dbReference>
<dbReference type="Pfam" id="PF00455">
    <property type="entry name" value="DeoRC"/>
    <property type="match status" value="1"/>
</dbReference>
<dbReference type="Pfam" id="PF08220">
    <property type="entry name" value="HTH_DeoR"/>
    <property type="match status" value="1"/>
</dbReference>
<dbReference type="PRINTS" id="PR00037">
    <property type="entry name" value="HTHLACR"/>
</dbReference>
<dbReference type="SMART" id="SM01134">
    <property type="entry name" value="DeoRC"/>
    <property type="match status" value="1"/>
</dbReference>
<dbReference type="SMART" id="SM00420">
    <property type="entry name" value="HTH_DEOR"/>
    <property type="match status" value="1"/>
</dbReference>
<dbReference type="SUPFAM" id="SSF100950">
    <property type="entry name" value="NagB/RpiA/CoA transferase-like"/>
    <property type="match status" value="1"/>
</dbReference>
<dbReference type="SUPFAM" id="SSF46785">
    <property type="entry name" value="Winged helix' DNA-binding domain"/>
    <property type="match status" value="1"/>
</dbReference>
<dbReference type="PROSITE" id="PS00894">
    <property type="entry name" value="HTH_DEOR_1"/>
    <property type="match status" value="1"/>
</dbReference>
<dbReference type="PROSITE" id="PS51000">
    <property type="entry name" value="HTH_DEOR_2"/>
    <property type="match status" value="1"/>
</dbReference>
<reference key="1">
    <citation type="journal article" date="1997" name="Science">
        <title>The complete genome sequence of Escherichia coli K-12.</title>
        <authorList>
            <person name="Blattner F.R."/>
            <person name="Plunkett G. III"/>
            <person name="Bloch C.A."/>
            <person name="Perna N.T."/>
            <person name="Burland V."/>
            <person name="Riley M."/>
            <person name="Collado-Vides J."/>
            <person name="Glasner J.D."/>
            <person name="Rode C.K."/>
            <person name="Mayhew G.F."/>
            <person name="Gregor J."/>
            <person name="Davis N.W."/>
            <person name="Kirkpatrick H.A."/>
            <person name="Goeden M.A."/>
            <person name="Rose D.J."/>
            <person name="Mau B."/>
            <person name="Shao Y."/>
        </authorList>
    </citation>
    <scope>NUCLEOTIDE SEQUENCE [LARGE SCALE GENOMIC DNA]</scope>
    <source>
        <strain>K12 / MG1655 / ATCC 47076</strain>
    </source>
</reference>
<reference key="2">
    <citation type="journal article" date="2006" name="Mol. Syst. Biol.">
        <title>Highly accurate genome sequences of Escherichia coli K-12 strains MG1655 and W3110.</title>
        <authorList>
            <person name="Hayashi K."/>
            <person name="Morooka N."/>
            <person name="Yamamoto Y."/>
            <person name="Fujita K."/>
            <person name="Isono K."/>
            <person name="Choi S."/>
            <person name="Ohtsubo E."/>
            <person name="Baba T."/>
            <person name="Wanner B.L."/>
            <person name="Mori H."/>
            <person name="Horiuchi T."/>
        </authorList>
    </citation>
    <scope>NUCLEOTIDE SEQUENCE [LARGE SCALE GENOMIC DNA]</scope>
    <source>
        <strain>K12 / W3110 / ATCC 27325 / DSM 5911</strain>
    </source>
</reference>
<comment type="sequence caution" evidence="2">
    <conflict type="erroneous initiation">
        <sequence resource="EMBL-CDS" id="AAA69245"/>
    </conflict>
</comment>
<comment type="sequence caution" evidence="2">
    <conflict type="erroneous initiation">
        <sequence resource="EMBL-CDS" id="BAE76812"/>
    </conflict>
</comment>